<accession>A1UZN5</accession>
<proteinExistence type="inferred from homology"/>
<dbReference type="EC" id="2.7.1.148" evidence="1"/>
<dbReference type="EMBL" id="CP000526">
    <property type="protein sequence ID" value="ABM50827.1"/>
    <property type="molecule type" value="Genomic_DNA"/>
</dbReference>
<dbReference type="RefSeq" id="WP_004195241.1">
    <property type="nucleotide sequence ID" value="NC_008785.1"/>
</dbReference>
<dbReference type="SMR" id="A1UZN5"/>
<dbReference type="GeneID" id="93059044"/>
<dbReference type="KEGG" id="bmv:BMASAVP1_A0086"/>
<dbReference type="HOGENOM" id="CLU_053057_3_0_4"/>
<dbReference type="UniPathway" id="UPA00056">
    <property type="reaction ID" value="UER00094"/>
</dbReference>
<dbReference type="GO" id="GO:0050515">
    <property type="term" value="F:4-(cytidine 5'-diphospho)-2-C-methyl-D-erythritol kinase activity"/>
    <property type="evidence" value="ECO:0007669"/>
    <property type="project" value="UniProtKB-UniRule"/>
</dbReference>
<dbReference type="GO" id="GO:0005524">
    <property type="term" value="F:ATP binding"/>
    <property type="evidence" value="ECO:0007669"/>
    <property type="project" value="UniProtKB-UniRule"/>
</dbReference>
<dbReference type="GO" id="GO:0019288">
    <property type="term" value="P:isopentenyl diphosphate biosynthetic process, methylerythritol 4-phosphate pathway"/>
    <property type="evidence" value="ECO:0007669"/>
    <property type="project" value="UniProtKB-UniRule"/>
</dbReference>
<dbReference type="GO" id="GO:0016114">
    <property type="term" value="P:terpenoid biosynthetic process"/>
    <property type="evidence" value="ECO:0007669"/>
    <property type="project" value="InterPro"/>
</dbReference>
<dbReference type="Gene3D" id="3.30.230.10">
    <property type="match status" value="1"/>
</dbReference>
<dbReference type="Gene3D" id="3.30.70.890">
    <property type="entry name" value="GHMP kinase, C-terminal domain"/>
    <property type="match status" value="1"/>
</dbReference>
<dbReference type="HAMAP" id="MF_00061">
    <property type="entry name" value="IspE"/>
    <property type="match status" value="1"/>
</dbReference>
<dbReference type="InterPro" id="IPR013750">
    <property type="entry name" value="GHMP_kinase_C_dom"/>
</dbReference>
<dbReference type="InterPro" id="IPR036554">
    <property type="entry name" value="GHMP_kinase_C_sf"/>
</dbReference>
<dbReference type="InterPro" id="IPR006204">
    <property type="entry name" value="GHMP_kinase_N_dom"/>
</dbReference>
<dbReference type="InterPro" id="IPR004424">
    <property type="entry name" value="IspE"/>
</dbReference>
<dbReference type="InterPro" id="IPR020568">
    <property type="entry name" value="Ribosomal_Su5_D2-typ_SF"/>
</dbReference>
<dbReference type="InterPro" id="IPR014721">
    <property type="entry name" value="Ribsml_uS5_D2-typ_fold_subgr"/>
</dbReference>
<dbReference type="NCBIfam" id="TIGR00154">
    <property type="entry name" value="ispE"/>
    <property type="match status" value="1"/>
</dbReference>
<dbReference type="NCBIfam" id="NF011202">
    <property type="entry name" value="PRK14608.1"/>
    <property type="match status" value="1"/>
</dbReference>
<dbReference type="PANTHER" id="PTHR43527">
    <property type="entry name" value="4-DIPHOSPHOCYTIDYL-2-C-METHYL-D-ERYTHRITOL KINASE, CHLOROPLASTIC"/>
    <property type="match status" value="1"/>
</dbReference>
<dbReference type="PANTHER" id="PTHR43527:SF2">
    <property type="entry name" value="4-DIPHOSPHOCYTIDYL-2-C-METHYL-D-ERYTHRITOL KINASE, CHLOROPLASTIC"/>
    <property type="match status" value="1"/>
</dbReference>
<dbReference type="Pfam" id="PF08544">
    <property type="entry name" value="GHMP_kinases_C"/>
    <property type="match status" value="1"/>
</dbReference>
<dbReference type="Pfam" id="PF00288">
    <property type="entry name" value="GHMP_kinases_N"/>
    <property type="match status" value="1"/>
</dbReference>
<dbReference type="PIRSF" id="PIRSF010376">
    <property type="entry name" value="IspE"/>
    <property type="match status" value="1"/>
</dbReference>
<dbReference type="SUPFAM" id="SSF55060">
    <property type="entry name" value="GHMP Kinase, C-terminal domain"/>
    <property type="match status" value="1"/>
</dbReference>
<dbReference type="SUPFAM" id="SSF54211">
    <property type="entry name" value="Ribosomal protein S5 domain 2-like"/>
    <property type="match status" value="1"/>
</dbReference>
<name>ISPE_BURMS</name>
<gene>
    <name evidence="1" type="primary">ispE</name>
    <name type="ordered locus">BMASAVP1_A0086</name>
</gene>
<keyword id="KW-0067">ATP-binding</keyword>
<keyword id="KW-0414">Isoprene biosynthesis</keyword>
<keyword id="KW-0418">Kinase</keyword>
<keyword id="KW-0547">Nucleotide-binding</keyword>
<keyword id="KW-0808">Transferase</keyword>
<reference key="1">
    <citation type="journal article" date="2010" name="Genome Biol. Evol.">
        <title>Continuing evolution of Burkholderia mallei through genome reduction and large-scale rearrangements.</title>
        <authorList>
            <person name="Losada L."/>
            <person name="Ronning C.M."/>
            <person name="DeShazer D."/>
            <person name="Woods D."/>
            <person name="Fedorova N."/>
            <person name="Kim H.S."/>
            <person name="Shabalina S.A."/>
            <person name="Pearson T.R."/>
            <person name="Brinkac L."/>
            <person name="Tan P."/>
            <person name="Nandi T."/>
            <person name="Crabtree J."/>
            <person name="Badger J."/>
            <person name="Beckstrom-Sternberg S."/>
            <person name="Saqib M."/>
            <person name="Schutzer S.E."/>
            <person name="Keim P."/>
            <person name="Nierman W.C."/>
        </authorList>
    </citation>
    <scope>NUCLEOTIDE SEQUENCE [LARGE SCALE GENOMIC DNA]</scope>
    <source>
        <strain>SAVP1</strain>
    </source>
</reference>
<feature type="chain" id="PRO_1000007822" description="4-diphosphocytidyl-2-C-methyl-D-erythritol kinase">
    <location>
        <begin position="1"/>
        <end position="293"/>
    </location>
</feature>
<feature type="active site" evidence="1">
    <location>
        <position position="16"/>
    </location>
</feature>
<feature type="active site" evidence="1">
    <location>
        <position position="141"/>
    </location>
</feature>
<feature type="binding site" evidence="1">
    <location>
        <begin position="99"/>
        <end position="109"/>
    </location>
    <ligand>
        <name>ATP</name>
        <dbReference type="ChEBI" id="CHEBI:30616"/>
    </ligand>
</feature>
<protein>
    <recommendedName>
        <fullName evidence="1">4-diphosphocytidyl-2-C-methyl-D-erythritol kinase</fullName>
        <shortName evidence="1">CMK</shortName>
        <ecNumber evidence="1">2.7.1.148</ecNumber>
    </recommendedName>
    <alternativeName>
        <fullName evidence="1">4-(cytidine-5'-diphospho)-2-C-methyl-D-erythritol kinase</fullName>
    </alternativeName>
</protein>
<comment type="function">
    <text evidence="1">Catalyzes the phosphorylation of the position 2 hydroxy group of 4-diphosphocytidyl-2C-methyl-D-erythritol.</text>
</comment>
<comment type="catalytic activity">
    <reaction evidence="1">
        <text>4-CDP-2-C-methyl-D-erythritol + ATP = 4-CDP-2-C-methyl-D-erythritol 2-phosphate + ADP + H(+)</text>
        <dbReference type="Rhea" id="RHEA:18437"/>
        <dbReference type="ChEBI" id="CHEBI:15378"/>
        <dbReference type="ChEBI" id="CHEBI:30616"/>
        <dbReference type="ChEBI" id="CHEBI:57823"/>
        <dbReference type="ChEBI" id="CHEBI:57919"/>
        <dbReference type="ChEBI" id="CHEBI:456216"/>
        <dbReference type="EC" id="2.7.1.148"/>
    </reaction>
</comment>
<comment type="pathway">
    <text evidence="1">Isoprenoid biosynthesis; isopentenyl diphosphate biosynthesis via DXP pathway; isopentenyl diphosphate from 1-deoxy-D-xylulose 5-phosphate: step 3/6.</text>
</comment>
<comment type="similarity">
    <text evidence="1">Belongs to the GHMP kinase family. IspE subfamily.</text>
</comment>
<sequence length="293" mass="31635">MTDTTRSLRDCLAPAKLNLFLHITGRRPDGYHALQSVFQLLDWGDRLHFTLRDDGKVSRVTDVPGVPEESDLVVRAASLLKAHAGATLGVDIEIDKRLPMGAGLGGGSSDAATTLLALNRLWRLDLPRTTLQSLAVKLGADVPFFVFGKNAFAEGIGEALQAVELPARWFLVVTPRVHVPTAAIFSEKSLTRDSKPITITDFLAQRGIDAGWPDSFGRNDMQPVVTSKYAEVAKVVEWFYNLTPARMTGSGASVFAAFKSKADAEAAQAKLPAGWNSAVAESMSEHPLFAFAS</sequence>
<evidence type="ECO:0000255" key="1">
    <source>
        <dbReference type="HAMAP-Rule" id="MF_00061"/>
    </source>
</evidence>
<organism>
    <name type="scientific">Burkholderia mallei (strain SAVP1)</name>
    <dbReference type="NCBI Taxonomy" id="320388"/>
    <lineage>
        <taxon>Bacteria</taxon>
        <taxon>Pseudomonadati</taxon>
        <taxon>Pseudomonadota</taxon>
        <taxon>Betaproteobacteria</taxon>
        <taxon>Burkholderiales</taxon>
        <taxon>Burkholderiaceae</taxon>
        <taxon>Burkholderia</taxon>
        <taxon>pseudomallei group</taxon>
    </lineage>
</organism>